<comment type="catalytic activity">
    <reaction>
        <text>a quinone + sn-glycerol 3-phosphate = dihydroxyacetone phosphate + a quinol</text>
        <dbReference type="Rhea" id="RHEA:18977"/>
        <dbReference type="ChEBI" id="CHEBI:24646"/>
        <dbReference type="ChEBI" id="CHEBI:57597"/>
        <dbReference type="ChEBI" id="CHEBI:57642"/>
        <dbReference type="ChEBI" id="CHEBI:132124"/>
        <dbReference type="EC" id="1.1.5.3"/>
    </reaction>
</comment>
<comment type="cofactor">
    <cofactor evidence="1">
        <name>FAD</name>
        <dbReference type="ChEBI" id="CHEBI:57692"/>
    </cofactor>
</comment>
<comment type="subcellular location">
    <subcellularLocation>
        <location>Cytoplasm</location>
    </subcellularLocation>
</comment>
<comment type="similarity">
    <text evidence="3">Belongs to the FAD-dependent glycerol-3-phosphate dehydrogenase family.</text>
</comment>
<dbReference type="EC" id="1.1.5.3"/>
<dbReference type="EMBL" id="AB015976">
    <property type="protein sequence ID" value="BAA31550.1"/>
    <property type="molecule type" value="Genomic_DNA"/>
</dbReference>
<dbReference type="SMR" id="O83004"/>
<dbReference type="GO" id="GO:0005737">
    <property type="term" value="C:cytoplasm"/>
    <property type="evidence" value="ECO:0007669"/>
    <property type="project" value="UniProtKB-SubCell"/>
</dbReference>
<dbReference type="GO" id="GO:0004368">
    <property type="term" value="F:glycerol-3-phosphate dehydrogenase (quinone) activity"/>
    <property type="evidence" value="ECO:0007669"/>
    <property type="project" value="UniProtKB-EC"/>
</dbReference>
<dbReference type="GO" id="GO:0006071">
    <property type="term" value="P:glycerol metabolic process"/>
    <property type="evidence" value="ECO:0007669"/>
    <property type="project" value="UniProtKB-KW"/>
</dbReference>
<dbReference type="GO" id="GO:0046168">
    <property type="term" value="P:glycerol-3-phosphate catabolic process"/>
    <property type="evidence" value="ECO:0007669"/>
    <property type="project" value="TreeGrafter"/>
</dbReference>
<dbReference type="Gene3D" id="6.10.250.1890">
    <property type="match status" value="1"/>
</dbReference>
<dbReference type="Gene3D" id="1.10.8.870">
    <property type="entry name" value="Alpha-glycerophosphate oxidase, cap domain"/>
    <property type="match status" value="1"/>
</dbReference>
<dbReference type="Gene3D" id="3.30.9.10">
    <property type="entry name" value="D-Amino Acid Oxidase, subunit A, domain 2"/>
    <property type="match status" value="1"/>
</dbReference>
<dbReference type="Gene3D" id="3.50.50.60">
    <property type="entry name" value="FAD/NAD(P)-binding domain"/>
    <property type="match status" value="1"/>
</dbReference>
<dbReference type="InterPro" id="IPR031656">
    <property type="entry name" value="DAO_C"/>
</dbReference>
<dbReference type="InterPro" id="IPR038299">
    <property type="entry name" value="DAO_C_sf"/>
</dbReference>
<dbReference type="InterPro" id="IPR006076">
    <property type="entry name" value="FAD-dep_OxRdtase"/>
</dbReference>
<dbReference type="InterPro" id="IPR036188">
    <property type="entry name" value="FAD/NAD-bd_sf"/>
</dbReference>
<dbReference type="InterPro" id="IPR000447">
    <property type="entry name" value="G3P_DH_FAD-dep"/>
</dbReference>
<dbReference type="NCBIfam" id="NF008899">
    <property type="entry name" value="PRK12266.1"/>
    <property type="match status" value="1"/>
</dbReference>
<dbReference type="NCBIfam" id="NF009906">
    <property type="entry name" value="PRK13369.1"/>
    <property type="match status" value="1"/>
</dbReference>
<dbReference type="PANTHER" id="PTHR11985">
    <property type="entry name" value="GLYCEROL-3-PHOSPHATE DEHYDROGENASE"/>
    <property type="match status" value="1"/>
</dbReference>
<dbReference type="PANTHER" id="PTHR11985:SF15">
    <property type="entry name" value="GLYCEROL-3-PHOSPHATE DEHYDROGENASE, MITOCHONDRIAL"/>
    <property type="match status" value="1"/>
</dbReference>
<dbReference type="Pfam" id="PF01266">
    <property type="entry name" value="DAO"/>
    <property type="match status" value="1"/>
</dbReference>
<dbReference type="Pfam" id="PF16901">
    <property type="entry name" value="DAO_C"/>
    <property type="match status" value="1"/>
</dbReference>
<dbReference type="PRINTS" id="PR01001">
    <property type="entry name" value="FADG3PDH"/>
</dbReference>
<dbReference type="SUPFAM" id="SSF51905">
    <property type="entry name" value="FAD/NAD(P)-binding domain"/>
    <property type="match status" value="1"/>
</dbReference>
<dbReference type="PROSITE" id="PS00977">
    <property type="entry name" value="FAD_G3PDH_1"/>
    <property type="match status" value="1"/>
</dbReference>
<dbReference type="PROSITE" id="PS00978">
    <property type="entry name" value="FAD_G3PDH_2"/>
    <property type="match status" value="1"/>
</dbReference>
<protein>
    <recommendedName>
        <fullName>Glycerol-3-phosphate dehydrogenase</fullName>
        <ecNumber>1.1.5.3</ecNumber>
    </recommendedName>
</protein>
<proteinExistence type="inferred from homology"/>
<reference key="1">
    <citation type="submission" date="1998-07" db="EMBL/GenBank/DDBJ databases">
        <title>GlpD of Pseudomonas tolaasii.</title>
        <authorList>
            <person name="Murata H."/>
        </authorList>
    </citation>
    <scope>NUCLEOTIDE SEQUENCE [GENOMIC DNA]</scope>
    <source>
        <strain>PT814</strain>
    </source>
</reference>
<organism>
    <name type="scientific">Pseudomonas tolaasii</name>
    <dbReference type="NCBI Taxonomy" id="29442"/>
    <lineage>
        <taxon>Bacteria</taxon>
        <taxon>Pseudomonadati</taxon>
        <taxon>Pseudomonadota</taxon>
        <taxon>Gammaproteobacteria</taxon>
        <taxon>Pseudomonadales</taxon>
        <taxon>Pseudomonadaceae</taxon>
        <taxon>Pseudomonas</taxon>
    </lineage>
</organism>
<evidence type="ECO:0000250" key="1"/>
<evidence type="ECO:0000255" key="2"/>
<evidence type="ECO:0000305" key="3"/>
<sequence>MNPSTLPAPPLAEVYDVAVIGGGINGVGIAADAAGRGLSVFLCEKDDLASHTSSASSKLIHGGLRYLEHYEFRLVREALAEREVLLAKAPHIVKQMRFVLPHRPHLRPAWMIRAGLFLYDHLGKREKLAGSKSLKFGANSPLKSEITKGFEYSDCWVDDARLVVLNAMAAREKGAHIHTQTRCISAHRSNGLWEMNMERADGSLFSIRARALVNAAGPWVAKFIRDDLKLDSPYGIRLIQGSHLIVPRLYEGAHAHILQNEDQRIVFTIPYLNHLTIIGTTDREYTGDPAKVAITEGETDYMLKVVNAHFKKQLSRDDIVHTYSGVRPLCNDESDNPSAITRDYTLALSGGNGEAPILSVFGGKLTTYRKLAESAMAQLAPFFTQMRPSWTAKASLPGGENMTTPERAGRRHPRQIRLGTERDAPRRWATTYGSRTWRLLEGVQALADLGDHLGGGLYTREVDYLCAEEWATQPQDILWRRTKLGLFTTAEEQDNVQRYLSKVGQTRAKIEAA</sequence>
<feature type="chain" id="PRO_0000126105" description="Glycerol-3-phosphate dehydrogenase">
    <location>
        <begin position="1"/>
        <end position="513"/>
    </location>
</feature>
<feature type="binding site" evidence="2">
    <location>
        <begin position="16"/>
        <end position="44"/>
    </location>
    <ligand>
        <name>FAD</name>
        <dbReference type="ChEBI" id="CHEBI:57692"/>
    </ligand>
</feature>
<keyword id="KW-0963">Cytoplasm</keyword>
<keyword id="KW-0274">FAD</keyword>
<keyword id="KW-0285">Flavoprotein</keyword>
<keyword id="KW-0319">Glycerol metabolism</keyword>
<keyword id="KW-0560">Oxidoreductase</keyword>
<name>GLPD_PSETO</name>
<gene>
    <name type="primary">glpD</name>
</gene>
<accession>O83004</accession>